<reference key="1">
    <citation type="submission" date="2007-10" db="EMBL/GenBank/DDBJ databases">
        <title>Complete sequence of Salinispora arenicola CNS-205.</title>
        <authorList>
            <consortium name="US DOE Joint Genome Institute"/>
            <person name="Copeland A."/>
            <person name="Lucas S."/>
            <person name="Lapidus A."/>
            <person name="Barry K."/>
            <person name="Glavina del Rio T."/>
            <person name="Dalin E."/>
            <person name="Tice H."/>
            <person name="Pitluck S."/>
            <person name="Foster B."/>
            <person name="Schmutz J."/>
            <person name="Larimer F."/>
            <person name="Land M."/>
            <person name="Hauser L."/>
            <person name="Kyrpides N."/>
            <person name="Ivanova N."/>
            <person name="Jensen P.R."/>
            <person name="Moore B.S."/>
            <person name="Penn K."/>
            <person name="Jenkins C."/>
            <person name="Udwary D."/>
            <person name="Xiang L."/>
            <person name="Gontang E."/>
            <person name="Richardson P."/>
        </authorList>
    </citation>
    <scope>NUCLEOTIDE SEQUENCE [LARGE SCALE GENOMIC DNA]</scope>
    <source>
        <strain>CNS-205</strain>
    </source>
</reference>
<comment type="function">
    <text evidence="1">Catalyzes the condensation of carbamoyl phosphate and aspartate to form carbamoyl aspartate and inorganic phosphate, the committed step in the de novo pyrimidine nucleotide biosynthesis pathway.</text>
</comment>
<comment type="catalytic activity">
    <reaction evidence="1">
        <text>carbamoyl phosphate + L-aspartate = N-carbamoyl-L-aspartate + phosphate + H(+)</text>
        <dbReference type="Rhea" id="RHEA:20013"/>
        <dbReference type="ChEBI" id="CHEBI:15378"/>
        <dbReference type="ChEBI" id="CHEBI:29991"/>
        <dbReference type="ChEBI" id="CHEBI:32814"/>
        <dbReference type="ChEBI" id="CHEBI:43474"/>
        <dbReference type="ChEBI" id="CHEBI:58228"/>
        <dbReference type="EC" id="2.1.3.2"/>
    </reaction>
</comment>
<comment type="pathway">
    <text evidence="1">Pyrimidine metabolism; UMP biosynthesis via de novo pathway; (S)-dihydroorotate from bicarbonate: step 2/3.</text>
</comment>
<comment type="subunit">
    <text evidence="1">Heterododecamer (2C3:3R2) of six catalytic PyrB chains organized as two trimers (C3), and six regulatory PyrI chains organized as three dimers (R2).</text>
</comment>
<comment type="similarity">
    <text evidence="1">Belongs to the aspartate/ornithine carbamoyltransferase superfamily. ATCase family.</text>
</comment>
<feature type="chain" id="PRO_0000334591" description="Aspartate carbamoyltransferase catalytic subunit">
    <location>
        <begin position="1"/>
        <end position="308"/>
    </location>
</feature>
<feature type="binding site" evidence="1">
    <location>
        <position position="55"/>
    </location>
    <ligand>
        <name>carbamoyl phosphate</name>
        <dbReference type="ChEBI" id="CHEBI:58228"/>
    </ligand>
</feature>
<feature type="binding site" evidence="1">
    <location>
        <position position="56"/>
    </location>
    <ligand>
        <name>carbamoyl phosphate</name>
        <dbReference type="ChEBI" id="CHEBI:58228"/>
    </ligand>
</feature>
<feature type="binding site" evidence="1">
    <location>
        <position position="83"/>
    </location>
    <ligand>
        <name>L-aspartate</name>
        <dbReference type="ChEBI" id="CHEBI:29991"/>
    </ligand>
</feature>
<feature type="binding site" evidence="1">
    <location>
        <position position="105"/>
    </location>
    <ligand>
        <name>carbamoyl phosphate</name>
        <dbReference type="ChEBI" id="CHEBI:58228"/>
    </ligand>
</feature>
<feature type="binding site" evidence="1">
    <location>
        <position position="133"/>
    </location>
    <ligand>
        <name>carbamoyl phosphate</name>
        <dbReference type="ChEBI" id="CHEBI:58228"/>
    </ligand>
</feature>
<feature type="binding site" evidence="1">
    <location>
        <position position="136"/>
    </location>
    <ligand>
        <name>carbamoyl phosphate</name>
        <dbReference type="ChEBI" id="CHEBI:58228"/>
    </ligand>
</feature>
<feature type="binding site" evidence="1">
    <location>
        <position position="166"/>
    </location>
    <ligand>
        <name>L-aspartate</name>
        <dbReference type="ChEBI" id="CHEBI:29991"/>
    </ligand>
</feature>
<feature type="binding site" evidence="1">
    <location>
        <position position="223"/>
    </location>
    <ligand>
        <name>L-aspartate</name>
        <dbReference type="ChEBI" id="CHEBI:29991"/>
    </ligand>
</feature>
<feature type="binding site" evidence="1">
    <location>
        <position position="264"/>
    </location>
    <ligand>
        <name>carbamoyl phosphate</name>
        <dbReference type="ChEBI" id="CHEBI:58228"/>
    </ligand>
</feature>
<feature type="binding site" evidence="1">
    <location>
        <position position="265"/>
    </location>
    <ligand>
        <name>carbamoyl phosphate</name>
        <dbReference type="ChEBI" id="CHEBI:58228"/>
    </ligand>
</feature>
<keyword id="KW-0665">Pyrimidine biosynthesis</keyword>
<keyword id="KW-0808">Transferase</keyword>
<dbReference type="EC" id="2.1.3.2" evidence="1"/>
<dbReference type="EMBL" id="CP000850">
    <property type="protein sequence ID" value="ABV97731.1"/>
    <property type="molecule type" value="Genomic_DNA"/>
</dbReference>
<dbReference type="SMR" id="A8LY14"/>
<dbReference type="STRING" id="391037.Sare_1846"/>
<dbReference type="KEGG" id="saq:Sare_1846"/>
<dbReference type="PATRIC" id="fig|391037.6.peg.1874"/>
<dbReference type="eggNOG" id="COG0540">
    <property type="taxonomic scope" value="Bacteria"/>
</dbReference>
<dbReference type="HOGENOM" id="CLU_043846_2_0_11"/>
<dbReference type="OrthoDB" id="9774690at2"/>
<dbReference type="UniPathway" id="UPA00070">
    <property type="reaction ID" value="UER00116"/>
</dbReference>
<dbReference type="GO" id="GO:0005829">
    <property type="term" value="C:cytosol"/>
    <property type="evidence" value="ECO:0007669"/>
    <property type="project" value="TreeGrafter"/>
</dbReference>
<dbReference type="GO" id="GO:0016597">
    <property type="term" value="F:amino acid binding"/>
    <property type="evidence" value="ECO:0007669"/>
    <property type="project" value="InterPro"/>
</dbReference>
<dbReference type="GO" id="GO:0004070">
    <property type="term" value="F:aspartate carbamoyltransferase activity"/>
    <property type="evidence" value="ECO:0007669"/>
    <property type="project" value="UniProtKB-UniRule"/>
</dbReference>
<dbReference type="GO" id="GO:0006207">
    <property type="term" value="P:'de novo' pyrimidine nucleobase biosynthetic process"/>
    <property type="evidence" value="ECO:0007669"/>
    <property type="project" value="InterPro"/>
</dbReference>
<dbReference type="GO" id="GO:0044205">
    <property type="term" value="P:'de novo' UMP biosynthetic process"/>
    <property type="evidence" value="ECO:0007669"/>
    <property type="project" value="UniProtKB-UniRule"/>
</dbReference>
<dbReference type="GO" id="GO:0006520">
    <property type="term" value="P:amino acid metabolic process"/>
    <property type="evidence" value="ECO:0007669"/>
    <property type="project" value="InterPro"/>
</dbReference>
<dbReference type="FunFam" id="3.40.50.1370:FF:000007">
    <property type="entry name" value="Aspartate carbamoyltransferase"/>
    <property type="match status" value="1"/>
</dbReference>
<dbReference type="FunFam" id="3.40.50.1370:FF:000012">
    <property type="entry name" value="Aspartate carbamoyltransferase"/>
    <property type="match status" value="1"/>
</dbReference>
<dbReference type="Gene3D" id="3.40.50.1370">
    <property type="entry name" value="Aspartate/ornithine carbamoyltransferase"/>
    <property type="match status" value="2"/>
</dbReference>
<dbReference type="HAMAP" id="MF_00001">
    <property type="entry name" value="Asp_carb_tr"/>
    <property type="match status" value="1"/>
</dbReference>
<dbReference type="InterPro" id="IPR006132">
    <property type="entry name" value="Asp/Orn_carbamoyltranf_P-bd"/>
</dbReference>
<dbReference type="InterPro" id="IPR006130">
    <property type="entry name" value="Asp/Orn_carbamoylTrfase"/>
</dbReference>
<dbReference type="InterPro" id="IPR036901">
    <property type="entry name" value="Asp/Orn_carbamoylTrfase_sf"/>
</dbReference>
<dbReference type="InterPro" id="IPR002082">
    <property type="entry name" value="Asp_carbamoyltransf"/>
</dbReference>
<dbReference type="InterPro" id="IPR006131">
    <property type="entry name" value="Asp_carbamoyltransf_Asp/Orn-bd"/>
</dbReference>
<dbReference type="NCBIfam" id="TIGR00670">
    <property type="entry name" value="asp_carb_tr"/>
    <property type="match status" value="1"/>
</dbReference>
<dbReference type="NCBIfam" id="NF002032">
    <property type="entry name" value="PRK00856.1"/>
    <property type="match status" value="1"/>
</dbReference>
<dbReference type="PANTHER" id="PTHR45753:SF6">
    <property type="entry name" value="ASPARTATE CARBAMOYLTRANSFERASE"/>
    <property type="match status" value="1"/>
</dbReference>
<dbReference type="PANTHER" id="PTHR45753">
    <property type="entry name" value="ORNITHINE CARBAMOYLTRANSFERASE, MITOCHONDRIAL"/>
    <property type="match status" value="1"/>
</dbReference>
<dbReference type="Pfam" id="PF00185">
    <property type="entry name" value="OTCace"/>
    <property type="match status" value="1"/>
</dbReference>
<dbReference type="Pfam" id="PF02729">
    <property type="entry name" value="OTCace_N"/>
    <property type="match status" value="1"/>
</dbReference>
<dbReference type="PRINTS" id="PR00100">
    <property type="entry name" value="AOTCASE"/>
</dbReference>
<dbReference type="PRINTS" id="PR00101">
    <property type="entry name" value="ATCASE"/>
</dbReference>
<dbReference type="SUPFAM" id="SSF53671">
    <property type="entry name" value="Aspartate/ornithine carbamoyltransferase"/>
    <property type="match status" value="1"/>
</dbReference>
<dbReference type="PROSITE" id="PS00097">
    <property type="entry name" value="CARBAMOYLTRANSFERASE"/>
    <property type="match status" value="1"/>
</dbReference>
<gene>
    <name evidence="1" type="primary">pyrB</name>
    <name type="ordered locus">Sare_1846</name>
</gene>
<proteinExistence type="inferred from homology"/>
<sequence>MIRHLLSGADVDAGTANRILDTAAEMATVAGREVKKLPALRGRTVVNLFYEDSTRTRISFEAAAKRLSADVINFSAKGSSVTKGESLKDTALTLQAMGADAVVVRHPASGAPHRLAEWVDGSVVNAGDGTHEHPTQALLDAYTMRSRLGRLAGLSVAVVGDVLHSRVARSNVLLLSTLGAKVTLVGPPPLIPVDIVAALAPGTAVCYDLDAVLPQSDVVMMLRVQRERMNDSYFPSAREYARRYGLDGTRMRRLPEHAIVMHPGPMNRGMEITPEVADSPRSTIVEQVANGVSVRMAVLYLLLGGNNR</sequence>
<name>PYRB_SALAI</name>
<accession>A8LY14</accession>
<protein>
    <recommendedName>
        <fullName evidence="1">Aspartate carbamoyltransferase catalytic subunit</fullName>
        <ecNumber evidence="1">2.1.3.2</ecNumber>
    </recommendedName>
    <alternativeName>
        <fullName evidence="1">Aspartate transcarbamylase</fullName>
        <shortName evidence="1">ATCase</shortName>
    </alternativeName>
</protein>
<organism>
    <name type="scientific">Salinispora arenicola (strain CNS-205)</name>
    <dbReference type="NCBI Taxonomy" id="391037"/>
    <lineage>
        <taxon>Bacteria</taxon>
        <taxon>Bacillati</taxon>
        <taxon>Actinomycetota</taxon>
        <taxon>Actinomycetes</taxon>
        <taxon>Micromonosporales</taxon>
        <taxon>Micromonosporaceae</taxon>
        <taxon>Salinispora</taxon>
    </lineage>
</organism>
<evidence type="ECO:0000255" key="1">
    <source>
        <dbReference type="HAMAP-Rule" id="MF_00001"/>
    </source>
</evidence>